<proteinExistence type="inferred from homology"/>
<keyword id="KW-0067">ATP-binding</keyword>
<keyword id="KW-0436">Ligase</keyword>
<keyword id="KW-0479">Metal-binding</keyword>
<keyword id="KW-0547">Nucleotide-binding</keyword>
<keyword id="KW-0671">Queuosine biosynthesis</keyword>
<keyword id="KW-0862">Zinc</keyword>
<accession>Q2W000</accession>
<name>QUEC_PARM1</name>
<organism>
    <name type="scientific">Paramagnetospirillum magneticum (strain ATCC 700264 / AMB-1)</name>
    <name type="common">Magnetospirillum magneticum</name>
    <dbReference type="NCBI Taxonomy" id="342108"/>
    <lineage>
        <taxon>Bacteria</taxon>
        <taxon>Pseudomonadati</taxon>
        <taxon>Pseudomonadota</taxon>
        <taxon>Alphaproteobacteria</taxon>
        <taxon>Rhodospirillales</taxon>
        <taxon>Magnetospirillaceae</taxon>
        <taxon>Paramagnetospirillum</taxon>
    </lineage>
</organism>
<protein>
    <recommendedName>
        <fullName evidence="1">7-cyano-7-deazaguanine synthase</fullName>
        <ecNumber evidence="1">6.3.4.20</ecNumber>
    </recommendedName>
    <alternativeName>
        <fullName evidence="1">7-cyano-7-carbaguanine synthase</fullName>
    </alternativeName>
    <alternativeName>
        <fullName evidence="1">PreQ(0) synthase</fullName>
    </alternativeName>
    <alternativeName>
        <fullName evidence="1">Queuosine biosynthesis protein QueC</fullName>
    </alternativeName>
</protein>
<feature type="chain" id="PRO_0000246860" description="7-cyano-7-deazaguanine synthase">
    <location>
        <begin position="1"/>
        <end position="227"/>
    </location>
</feature>
<feature type="binding site" evidence="1">
    <location>
        <begin position="8"/>
        <end position="18"/>
    </location>
    <ligand>
        <name>ATP</name>
        <dbReference type="ChEBI" id="CHEBI:30616"/>
    </ligand>
</feature>
<feature type="binding site" evidence="1">
    <location>
        <position position="191"/>
    </location>
    <ligand>
        <name>Zn(2+)</name>
        <dbReference type="ChEBI" id="CHEBI:29105"/>
    </ligand>
</feature>
<feature type="binding site" evidence="1">
    <location>
        <position position="201"/>
    </location>
    <ligand>
        <name>Zn(2+)</name>
        <dbReference type="ChEBI" id="CHEBI:29105"/>
    </ligand>
</feature>
<feature type="binding site" evidence="1">
    <location>
        <position position="204"/>
    </location>
    <ligand>
        <name>Zn(2+)</name>
        <dbReference type="ChEBI" id="CHEBI:29105"/>
    </ligand>
</feature>
<feature type="binding site" evidence="1">
    <location>
        <position position="207"/>
    </location>
    <ligand>
        <name>Zn(2+)</name>
        <dbReference type="ChEBI" id="CHEBI:29105"/>
    </ligand>
</feature>
<comment type="function">
    <text evidence="1">Catalyzes the ATP-dependent conversion of 7-carboxy-7-deazaguanine (CDG) to 7-cyano-7-deazaguanine (preQ(0)).</text>
</comment>
<comment type="catalytic activity">
    <reaction evidence="1">
        <text>7-carboxy-7-deazaguanine + NH4(+) + ATP = 7-cyano-7-deazaguanine + ADP + phosphate + H2O + H(+)</text>
        <dbReference type="Rhea" id="RHEA:27982"/>
        <dbReference type="ChEBI" id="CHEBI:15377"/>
        <dbReference type="ChEBI" id="CHEBI:15378"/>
        <dbReference type="ChEBI" id="CHEBI:28938"/>
        <dbReference type="ChEBI" id="CHEBI:30616"/>
        <dbReference type="ChEBI" id="CHEBI:43474"/>
        <dbReference type="ChEBI" id="CHEBI:45075"/>
        <dbReference type="ChEBI" id="CHEBI:61036"/>
        <dbReference type="ChEBI" id="CHEBI:456216"/>
        <dbReference type="EC" id="6.3.4.20"/>
    </reaction>
</comment>
<comment type="cofactor">
    <cofactor evidence="1">
        <name>Zn(2+)</name>
        <dbReference type="ChEBI" id="CHEBI:29105"/>
    </cofactor>
    <text evidence="1">Binds 1 zinc ion per subunit.</text>
</comment>
<comment type="pathway">
    <text evidence="1">Purine metabolism; 7-cyano-7-deazaguanine biosynthesis.</text>
</comment>
<comment type="similarity">
    <text evidence="1">Belongs to the QueC family.</text>
</comment>
<dbReference type="EC" id="6.3.4.20" evidence="1"/>
<dbReference type="EMBL" id="AP007255">
    <property type="protein sequence ID" value="BAE52825.1"/>
    <property type="molecule type" value="Genomic_DNA"/>
</dbReference>
<dbReference type="RefSeq" id="WP_011386374.1">
    <property type="nucleotide sequence ID" value="NC_007626.1"/>
</dbReference>
<dbReference type="SMR" id="Q2W000"/>
<dbReference type="STRING" id="342108.amb4021"/>
<dbReference type="KEGG" id="mag:amb4021"/>
<dbReference type="HOGENOM" id="CLU_081854_1_1_5"/>
<dbReference type="OrthoDB" id="9789567at2"/>
<dbReference type="UniPathway" id="UPA00391"/>
<dbReference type="Proteomes" id="UP000007058">
    <property type="component" value="Chromosome"/>
</dbReference>
<dbReference type="GO" id="GO:0005524">
    <property type="term" value="F:ATP binding"/>
    <property type="evidence" value="ECO:0007669"/>
    <property type="project" value="UniProtKB-UniRule"/>
</dbReference>
<dbReference type="GO" id="GO:0016879">
    <property type="term" value="F:ligase activity, forming carbon-nitrogen bonds"/>
    <property type="evidence" value="ECO:0007669"/>
    <property type="project" value="UniProtKB-UniRule"/>
</dbReference>
<dbReference type="GO" id="GO:0008270">
    <property type="term" value="F:zinc ion binding"/>
    <property type="evidence" value="ECO:0007669"/>
    <property type="project" value="UniProtKB-UniRule"/>
</dbReference>
<dbReference type="GO" id="GO:0008616">
    <property type="term" value="P:queuosine biosynthetic process"/>
    <property type="evidence" value="ECO:0007669"/>
    <property type="project" value="UniProtKB-UniRule"/>
</dbReference>
<dbReference type="CDD" id="cd01995">
    <property type="entry name" value="QueC-like"/>
    <property type="match status" value="1"/>
</dbReference>
<dbReference type="Gene3D" id="3.40.50.620">
    <property type="entry name" value="HUPs"/>
    <property type="match status" value="1"/>
</dbReference>
<dbReference type="HAMAP" id="MF_01633">
    <property type="entry name" value="QueC"/>
    <property type="match status" value="1"/>
</dbReference>
<dbReference type="InterPro" id="IPR018317">
    <property type="entry name" value="QueC"/>
</dbReference>
<dbReference type="InterPro" id="IPR014729">
    <property type="entry name" value="Rossmann-like_a/b/a_fold"/>
</dbReference>
<dbReference type="NCBIfam" id="TIGR00364">
    <property type="entry name" value="7-cyano-7-deazaguanine synthase QueC"/>
    <property type="match status" value="1"/>
</dbReference>
<dbReference type="PANTHER" id="PTHR42914">
    <property type="entry name" value="7-CYANO-7-DEAZAGUANINE SYNTHASE"/>
    <property type="match status" value="1"/>
</dbReference>
<dbReference type="PANTHER" id="PTHR42914:SF1">
    <property type="entry name" value="7-CYANO-7-DEAZAGUANINE SYNTHASE"/>
    <property type="match status" value="1"/>
</dbReference>
<dbReference type="Pfam" id="PF06508">
    <property type="entry name" value="QueC"/>
    <property type="match status" value="1"/>
</dbReference>
<dbReference type="PIRSF" id="PIRSF006293">
    <property type="entry name" value="ExsB"/>
    <property type="match status" value="1"/>
</dbReference>
<dbReference type="SUPFAM" id="SSF52402">
    <property type="entry name" value="Adenine nucleotide alpha hydrolases-like"/>
    <property type="match status" value="1"/>
</dbReference>
<gene>
    <name evidence="1" type="primary">queC</name>
    <name type="ordered locus">amb4021</name>
</gene>
<sequence length="227" mass="23897">MKPAIVLLSGGLDSATVLAIAKAEGFAPAALTFRYGQRHAVEIRAAERVAAALGIRDHRIADIDLRVFGGSALTSDIAVPKGELDEAIPAGIPVTYVPARNTIMLSFALAFAEVLGAADIFVGVNAVDYSGYPDCRPDYIKAFEAMANLATKAAVEGTRLTIHTPLIDLTKGQIIRRGLDLGVDYSITSTCYDPTPDGKACGHCDSCRLRLKGFAEAGLADPAEYAS</sequence>
<evidence type="ECO:0000255" key="1">
    <source>
        <dbReference type="HAMAP-Rule" id="MF_01633"/>
    </source>
</evidence>
<reference key="1">
    <citation type="journal article" date="2005" name="DNA Res.">
        <title>Complete genome sequence of the facultative anaerobic magnetotactic bacterium Magnetospirillum sp. strain AMB-1.</title>
        <authorList>
            <person name="Matsunaga T."/>
            <person name="Okamura Y."/>
            <person name="Fukuda Y."/>
            <person name="Wahyudi A.T."/>
            <person name="Murase Y."/>
            <person name="Takeyama H."/>
        </authorList>
    </citation>
    <scope>NUCLEOTIDE SEQUENCE [LARGE SCALE GENOMIC DNA]</scope>
    <source>
        <strain>ATCC 700264 / AMB-1</strain>
    </source>
</reference>